<keyword id="KW-0597">Phosphoprotein</keyword>
<keyword id="KW-1185">Reference proteome</keyword>
<comment type="similarity">
    <text evidence="3">Belongs to the UPF0711 family.</text>
</comment>
<name>CR021_BOVIN</name>
<proteinExistence type="evidence at transcript level"/>
<feature type="chain" id="PRO_0000279447" description="UPF0711 protein C18orf21 homolog">
    <location>
        <begin position="1"/>
        <end position="216"/>
    </location>
</feature>
<feature type="region of interest" description="Disordered" evidence="2">
    <location>
        <begin position="118"/>
        <end position="185"/>
    </location>
</feature>
<feature type="region of interest" description="Disordered" evidence="2">
    <location>
        <begin position="197"/>
        <end position="216"/>
    </location>
</feature>
<feature type="compositionally biased region" description="Polar residues" evidence="2">
    <location>
        <begin position="124"/>
        <end position="136"/>
    </location>
</feature>
<feature type="compositionally biased region" description="Polar residues" evidence="2">
    <location>
        <begin position="145"/>
        <end position="157"/>
    </location>
</feature>
<feature type="compositionally biased region" description="Polar residues" evidence="2">
    <location>
        <begin position="167"/>
        <end position="182"/>
    </location>
</feature>
<feature type="compositionally biased region" description="Basic and acidic residues" evidence="2">
    <location>
        <begin position="200"/>
        <end position="209"/>
    </location>
</feature>
<feature type="modified residue" description="Phosphoserine" evidence="1">
    <location>
        <position position="126"/>
    </location>
</feature>
<feature type="modified residue" description="Phosphothreonine" evidence="1">
    <location>
        <position position="130"/>
    </location>
</feature>
<feature type="modified residue" description="Phosphothreonine" evidence="1">
    <location>
        <position position="139"/>
    </location>
</feature>
<evidence type="ECO:0000250" key="1">
    <source>
        <dbReference type="UniProtKB" id="Q32NC0"/>
    </source>
</evidence>
<evidence type="ECO:0000256" key="2">
    <source>
        <dbReference type="SAM" id="MobiDB-lite"/>
    </source>
</evidence>
<evidence type="ECO:0000305" key="3"/>
<organism>
    <name type="scientific">Bos taurus</name>
    <name type="common">Bovine</name>
    <dbReference type="NCBI Taxonomy" id="9913"/>
    <lineage>
        <taxon>Eukaryota</taxon>
        <taxon>Metazoa</taxon>
        <taxon>Chordata</taxon>
        <taxon>Craniata</taxon>
        <taxon>Vertebrata</taxon>
        <taxon>Euteleostomi</taxon>
        <taxon>Mammalia</taxon>
        <taxon>Eutheria</taxon>
        <taxon>Laurasiatheria</taxon>
        <taxon>Artiodactyla</taxon>
        <taxon>Ruminantia</taxon>
        <taxon>Pecora</taxon>
        <taxon>Bovidae</taxon>
        <taxon>Bovinae</taxon>
        <taxon>Bos</taxon>
    </lineage>
</organism>
<reference key="1">
    <citation type="submission" date="2006-08" db="EMBL/GenBank/DDBJ databases">
        <authorList>
            <consortium name="NIH - Mammalian Gene Collection (MGC) project"/>
        </authorList>
    </citation>
    <scope>NUCLEOTIDE SEQUENCE [LARGE SCALE MRNA]</scope>
    <source>
        <strain>Hereford</strain>
        <tissue>Heart ventricle</tissue>
    </source>
</reference>
<accession>Q05B49</accession>
<dbReference type="EMBL" id="BC122840">
    <property type="protein sequence ID" value="AAI22841.1"/>
    <property type="molecule type" value="mRNA"/>
</dbReference>
<dbReference type="RefSeq" id="NP_001073058.1">
    <property type="nucleotide sequence ID" value="NM_001079590.2"/>
</dbReference>
<dbReference type="FunCoup" id="Q05B49">
    <property type="interactions" value="2444"/>
</dbReference>
<dbReference type="STRING" id="9913.ENSBTAP00000015436"/>
<dbReference type="PaxDb" id="9913-ENSBTAP00000015436"/>
<dbReference type="GeneID" id="512779"/>
<dbReference type="KEGG" id="bta:512779"/>
<dbReference type="CTD" id="512779"/>
<dbReference type="eggNOG" id="ENOG502S2A1">
    <property type="taxonomic scope" value="Eukaryota"/>
</dbReference>
<dbReference type="InParanoid" id="Q05B49"/>
<dbReference type="OrthoDB" id="10049098at2759"/>
<dbReference type="Proteomes" id="UP000009136">
    <property type="component" value="Unplaced"/>
</dbReference>
<dbReference type="InterPro" id="IPR029779">
    <property type="entry name" value="DUF4674"/>
</dbReference>
<dbReference type="PANTHER" id="PTHR31402">
    <property type="entry name" value="UPF0711 PROTEIN C18ORF21"/>
    <property type="match status" value="1"/>
</dbReference>
<dbReference type="PANTHER" id="PTHR31402:SF2">
    <property type="entry name" value="UPF0711 PROTEIN C18ORF21"/>
    <property type="match status" value="1"/>
</dbReference>
<dbReference type="Pfam" id="PF15719">
    <property type="entry name" value="DUF4674"/>
    <property type="match status" value="1"/>
</dbReference>
<sequence>MRQKHYLEAAAWKLQDSCPGQARYLLWAYSSSHDDKSTFEGTCPYCCQLLVQDKSRVRLKPKPKLTPKIQKLLNREARNYTLSFKEAKILKKYKDSKSVLLITCKTCNRTVKHHGKSRSFLSALKSNPTTPTSKLSLKTPERKTPSSANLNHTSGSKGKSPALIFRTPTSGQSTSICSSKNASKTKKHFSQLKMLLSQSESKKNPKMDFRNFLSSL</sequence>
<protein>
    <recommendedName>
        <fullName>UPF0711 protein C18orf21 homolog</fullName>
    </recommendedName>
</protein>